<reference key="1">
    <citation type="journal article" date="2005" name="J. Bacteriol.">
        <title>Whole-genome sequencing of Staphylococcus haemolyticus uncovers the extreme plasticity of its genome and the evolution of human-colonizing staphylococcal species.</title>
        <authorList>
            <person name="Takeuchi F."/>
            <person name="Watanabe S."/>
            <person name="Baba T."/>
            <person name="Yuzawa H."/>
            <person name="Ito T."/>
            <person name="Morimoto Y."/>
            <person name="Kuroda M."/>
            <person name="Cui L."/>
            <person name="Takahashi M."/>
            <person name="Ankai A."/>
            <person name="Baba S."/>
            <person name="Fukui S."/>
            <person name="Lee J.C."/>
            <person name="Hiramatsu K."/>
        </authorList>
    </citation>
    <scope>NUCLEOTIDE SEQUENCE [LARGE SCALE GENOMIC DNA]</scope>
    <source>
        <strain>JCSC1435</strain>
    </source>
</reference>
<accession>Q4L5V8</accession>
<comment type="similarity">
    <text evidence="1">Belongs to the universal ribosomal protein uS2 family.</text>
</comment>
<proteinExistence type="inferred from homology"/>
<feature type="chain" id="PRO_1000004083" description="Small ribosomal subunit protein uS2">
    <location>
        <begin position="1"/>
        <end position="262"/>
    </location>
</feature>
<feature type="region of interest" description="Disordered" evidence="2">
    <location>
        <begin position="240"/>
        <end position="262"/>
    </location>
</feature>
<feature type="compositionally biased region" description="Acidic residues" evidence="2">
    <location>
        <begin position="243"/>
        <end position="254"/>
    </location>
</feature>
<keyword id="KW-0687">Ribonucleoprotein</keyword>
<keyword id="KW-0689">Ribosomal protein</keyword>
<sequence>MAVISMKQLLEAGVHFGHQTRRWNPKMKKYIFTERNGIYIIDLQKTVKKVEEAYNFIKQVSEDGGRVLFVGTKKQAQESVKAEAERAGQFYVNQRWLGGILTNYKTISKRIKRISEIEKMEEDGLFDVLPKKEVVELKKEYDRLIKFLGGIRDMKSMPQALFVVDPRKERNAIAEARKLNIPIVGIVDTNCDPDEIDYVIPANDDAIRAVKLLTGKMADAVLEGQQGVSNDEVAAEQNINLDEKEESQEAESTEENTTVESN</sequence>
<protein>
    <recommendedName>
        <fullName evidence="1">Small ribosomal subunit protein uS2</fullName>
    </recommendedName>
    <alternativeName>
        <fullName evidence="3">30S ribosomal protein S2</fullName>
    </alternativeName>
</protein>
<name>RS2_STAHJ</name>
<gene>
    <name evidence="1" type="primary">rpsB</name>
    <name type="ordered locus">SH1658</name>
</gene>
<organism>
    <name type="scientific">Staphylococcus haemolyticus (strain JCSC1435)</name>
    <dbReference type="NCBI Taxonomy" id="279808"/>
    <lineage>
        <taxon>Bacteria</taxon>
        <taxon>Bacillati</taxon>
        <taxon>Bacillota</taxon>
        <taxon>Bacilli</taxon>
        <taxon>Bacillales</taxon>
        <taxon>Staphylococcaceae</taxon>
        <taxon>Staphylococcus</taxon>
    </lineage>
</organism>
<dbReference type="EMBL" id="AP006716">
    <property type="protein sequence ID" value="BAE04967.1"/>
    <property type="molecule type" value="Genomic_DNA"/>
</dbReference>
<dbReference type="RefSeq" id="WP_011275944.1">
    <property type="nucleotide sequence ID" value="NC_007168.1"/>
</dbReference>
<dbReference type="SMR" id="Q4L5V8"/>
<dbReference type="GeneID" id="93781036"/>
<dbReference type="KEGG" id="sha:SH1658"/>
<dbReference type="eggNOG" id="COG0052">
    <property type="taxonomic scope" value="Bacteria"/>
</dbReference>
<dbReference type="HOGENOM" id="CLU_040318_1_2_9"/>
<dbReference type="OrthoDB" id="9808036at2"/>
<dbReference type="Proteomes" id="UP000000543">
    <property type="component" value="Chromosome"/>
</dbReference>
<dbReference type="GO" id="GO:0022627">
    <property type="term" value="C:cytosolic small ribosomal subunit"/>
    <property type="evidence" value="ECO:0007669"/>
    <property type="project" value="TreeGrafter"/>
</dbReference>
<dbReference type="GO" id="GO:0003735">
    <property type="term" value="F:structural constituent of ribosome"/>
    <property type="evidence" value="ECO:0007669"/>
    <property type="project" value="InterPro"/>
</dbReference>
<dbReference type="GO" id="GO:0006412">
    <property type="term" value="P:translation"/>
    <property type="evidence" value="ECO:0007669"/>
    <property type="project" value="UniProtKB-UniRule"/>
</dbReference>
<dbReference type="CDD" id="cd01425">
    <property type="entry name" value="RPS2"/>
    <property type="match status" value="1"/>
</dbReference>
<dbReference type="FunFam" id="1.10.287.610:FF:000001">
    <property type="entry name" value="30S ribosomal protein S2"/>
    <property type="match status" value="1"/>
</dbReference>
<dbReference type="Gene3D" id="3.40.50.10490">
    <property type="entry name" value="Glucose-6-phosphate isomerase like protein, domain 1"/>
    <property type="match status" value="1"/>
</dbReference>
<dbReference type="Gene3D" id="1.10.287.610">
    <property type="entry name" value="Helix hairpin bin"/>
    <property type="match status" value="1"/>
</dbReference>
<dbReference type="HAMAP" id="MF_00291_B">
    <property type="entry name" value="Ribosomal_uS2_B"/>
    <property type="match status" value="1"/>
</dbReference>
<dbReference type="InterPro" id="IPR001865">
    <property type="entry name" value="Ribosomal_uS2"/>
</dbReference>
<dbReference type="InterPro" id="IPR005706">
    <property type="entry name" value="Ribosomal_uS2_bac/mit/plastid"/>
</dbReference>
<dbReference type="InterPro" id="IPR018130">
    <property type="entry name" value="Ribosomal_uS2_CS"/>
</dbReference>
<dbReference type="InterPro" id="IPR023591">
    <property type="entry name" value="Ribosomal_uS2_flav_dom_sf"/>
</dbReference>
<dbReference type="NCBIfam" id="TIGR01011">
    <property type="entry name" value="rpsB_bact"/>
    <property type="match status" value="1"/>
</dbReference>
<dbReference type="PANTHER" id="PTHR12534">
    <property type="entry name" value="30S RIBOSOMAL PROTEIN S2 PROKARYOTIC AND ORGANELLAR"/>
    <property type="match status" value="1"/>
</dbReference>
<dbReference type="PANTHER" id="PTHR12534:SF0">
    <property type="entry name" value="SMALL RIBOSOMAL SUBUNIT PROTEIN US2M"/>
    <property type="match status" value="1"/>
</dbReference>
<dbReference type="Pfam" id="PF00318">
    <property type="entry name" value="Ribosomal_S2"/>
    <property type="match status" value="1"/>
</dbReference>
<dbReference type="PRINTS" id="PR00395">
    <property type="entry name" value="RIBOSOMALS2"/>
</dbReference>
<dbReference type="SUPFAM" id="SSF52313">
    <property type="entry name" value="Ribosomal protein S2"/>
    <property type="match status" value="1"/>
</dbReference>
<dbReference type="PROSITE" id="PS00962">
    <property type="entry name" value="RIBOSOMAL_S2_1"/>
    <property type="match status" value="1"/>
</dbReference>
<dbReference type="PROSITE" id="PS00963">
    <property type="entry name" value="RIBOSOMAL_S2_2"/>
    <property type="match status" value="1"/>
</dbReference>
<evidence type="ECO:0000255" key="1">
    <source>
        <dbReference type="HAMAP-Rule" id="MF_00291"/>
    </source>
</evidence>
<evidence type="ECO:0000256" key="2">
    <source>
        <dbReference type="SAM" id="MobiDB-lite"/>
    </source>
</evidence>
<evidence type="ECO:0000305" key="3"/>